<protein>
    <recommendedName>
        <fullName evidence="1">Large ribosomal subunit protein bL17</fullName>
    </recommendedName>
    <alternativeName>
        <fullName evidence="2">50S ribosomal protein L17</fullName>
    </alternativeName>
</protein>
<organism>
    <name type="scientific">Streptococcus gordonii (strain Challis / ATCC 35105 / BCRC 15272 / CH1 / DL1 / V288)</name>
    <dbReference type="NCBI Taxonomy" id="467705"/>
    <lineage>
        <taxon>Bacteria</taxon>
        <taxon>Bacillati</taxon>
        <taxon>Bacillota</taxon>
        <taxon>Bacilli</taxon>
        <taxon>Lactobacillales</taxon>
        <taxon>Streptococcaceae</taxon>
        <taxon>Streptococcus</taxon>
    </lineage>
</organism>
<reference key="1">
    <citation type="journal article" date="2007" name="J. Bacteriol.">
        <title>Genome-wide transcriptional changes in Streptococcus gordonii in response to competence signaling peptide.</title>
        <authorList>
            <person name="Vickerman M.M."/>
            <person name="Iobst S."/>
            <person name="Jesionowski A.M."/>
            <person name="Gill S.R."/>
        </authorList>
    </citation>
    <scope>NUCLEOTIDE SEQUENCE [LARGE SCALE GENOMIC DNA]</scope>
    <source>
        <strain>Challis / ATCC 35105 / BCRC 15272 / CH1 / DL1 / V288</strain>
    </source>
</reference>
<proteinExistence type="inferred from homology"/>
<sequence length="128" mass="14520">MAYRKLGRTSSQRKAMLRDLTTDLIINESIVTTEARAKEIRKTVEKMITLGKRGDLHARRQAAAFVRNEIASENYDEATEKYTSTTALQKLFSELAPRYAERNGGYTRILKTEPRRGDAAPMAIIELV</sequence>
<dbReference type="EMBL" id="CP000725">
    <property type="protein sequence ID" value="ABV09349.1"/>
    <property type="molecule type" value="Genomic_DNA"/>
</dbReference>
<dbReference type="RefSeq" id="WP_008809892.1">
    <property type="nucleotide sequence ID" value="NC_009785.1"/>
</dbReference>
<dbReference type="SMR" id="A8AZJ8"/>
<dbReference type="STRING" id="467705.SGO_1958"/>
<dbReference type="GeneID" id="93786869"/>
<dbReference type="KEGG" id="sgo:SGO_1958"/>
<dbReference type="eggNOG" id="COG0203">
    <property type="taxonomic scope" value="Bacteria"/>
</dbReference>
<dbReference type="HOGENOM" id="CLU_074407_2_2_9"/>
<dbReference type="Proteomes" id="UP000001131">
    <property type="component" value="Chromosome"/>
</dbReference>
<dbReference type="GO" id="GO:0022625">
    <property type="term" value="C:cytosolic large ribosomal subunit"/>
    <property type="evidence" value="ECO:0007669"/>
    <property type="project" value="TreeGrafter"/>
</dbReference>
<dbReference type="GO" id="GO:0003735">
    <property type="term" value="F:structural constituent of ribosome"/>
    <property type="evidence" value="ECO:0007669"/>
    <property type="project" value="InterPro"/>
</dbReference>
<dbReference type="GO" id="GO:0006412">
    <property type="term" value="P:translation"/>
    <property type="evidence" value="ECO:0007669"/>
    <property type="project" value="UniProtKB-UniRule"/>
</dbReference>
<dbReference type="FunFam" id="3.90.1030.10:FF:000002">
    <property type="entry name" value="50S ribosomal protein L17"/>
    <property type="match status" value="1"/>
</dbReference>
<dbReference type="Gene3D" id="3.90.1030.10">
    <property type="entry name" value="Ribosomal protein L17"/>
    <property type="match status" value="1"/>
</dbReference>
<dbReference type="HAMAP" id="MF_01368">
    <property type="entry name" value="Ribosomal_bL17"/>
    <property type="match status" value="1"/>
</dbReference>
<dbReference type="InterPro" id="IPR000456">
    <property type="entry name" value="Ribosomal_bL17"/>
</dbReference>
<dbReference type="InterPro" id="IPR047859">
    <property type="entry name" value="Ribosomal_bL17_CS"/>
</dbReference>
<dbReference type="InterPro" id="IPR036373">
    <property type="entry name" value="Ribosomal_bL17_sf"/>
</dbReference>
<dbReference type="NCBIfam" id="TIGR00059">
    <property type="entry name" value="L17"/>
    <property type="match status" value="1"/>
</dbReference>
<dbReference type="PANTHER" id="PTHR14413:SF16">
    <property type="entry name" value="LARGE RIBOSOMAL SUBUNIT PROTEIN BL17M"/>
    <property type="match status" value="1"/>
</dbReference>
<dbReference type="PANTHER" id="PTHR14413">
    <property type="entry name" value="RIBOSOMAL PROTEIN L17"/>
    <property type="match status" value="1"/>
</dbReference>
<dbReference type="Pfam" id="PF01196">
    <property type="entry name" value="Ribosomal_L17"/>
    <property type="match status" value="1"/>
</dbReference>
<dbReference type="SUPFAM" id="SSF64263">
    <property type="entry name" value="Prokaryotic ribosomal protein L17"/>
    <property type="match status" value="1"/>
</dbReference>
<dbReference type="PROSITE" id="PS01167">
    <property type="entry name" value="RIBOSOMAL_L17"/>
    <property type="match status" value="1"/>
</dbReference>
<feature type="chain" id="PRO_1000087200" description="Large ribosomal subunit protein bL17">
    <location>
        <begin position="1"/>
        <end position="128"/>
    </location>
</feature>
<accession>A8AZJ8</accession>
<comment type="subunit">
    <text evidence="1">Part of the 50S ribosomal subunit. Contacts protein L32.</text>
</comment>
<comment type="similarity">
    <text evidence="1">Belongs to the bacterial ribosomal protein bL17 family.</text>
</comment>
<gene>
    <name evidence="1" type="primary">rplQ</name>
    <name type="ordered locus">SGO_1958</name>
</gene>
<evidence type="ECO:0000255" key="1">
    <source>
        <dbReference type="HAMAP-Rule" id="MF_01368"/>
    </source>
</evidence>
<evidence type="ECO:0000305" key="2"/>
<keyword id="KW-1185">Reference proteome</keyword>
<keyword id="KW-0687">Ribonucleoprotein</keyword>
<keyword id="KW-0689">Ribosomal protein</keyword>
<name>RL17_STRGC</name>